<organism>
    <name type="scientific">Drosophila sechellia</name>
    <name type="common">Fruit fly</name>
    <dbReference type="NCBI Taxonomy" id="7238"/>
    <lineage>
        <taxon>Eukaryota</taxon>
        <taxon>Metazoa</taxon>
        <taxon>Ecdysozoa</taxon>
        <taxon>Arthropoda</taxon>
        <taxon>Hexapoda</taxon>
        <taxon>Insecta</taxon>
        <taxon>Pterygota</taxon>
        <taxon>Neoptera</taxon>
        <taxon>Endopterygota</taxon>
        <taxon>Diptera</taxon>
        <taxon>Brachycera</taxon>
        <taxon>Muscomorpha</taxon>
        <taxon>Ephydroidea</taxon>
        <taxon>Drosophilidae</taxon>
        <taxon>Drosophila</taxon>
        <taxon>Sophophora</taxon>
    </lineage>
</organism>
<reference key="1">
    <citation type="journal article" date="2007" name="Nature">
        <title>Evolution of genes and genomes on the Drosophila phylogeny.</title>
        <authorList>
            <consortium name="Drosophila 12 genomes consortium"/>
        </authorList>
    </citation>
    <scope>NUCLEOTIDE SEQUENCE [LARGE SCALE GENOMIC DNA]</scope>
    <source>
        <strain>Rob3c / Tucson 14021-0248.25</strain>
    </source>
</reference>
<keyword id="KW-0342">GTP-binding</keyword>
<keyword id="KW-0496">Mitochondrion</keyword>
<keyword id="KW-0547">Nucleotide-binding</keyword>
<keyword id="KW-0648">Protein biosynthesis</keyword>
<keyword id="KW-1185">Reference proteome</keyword>
<keyword id="KW-0809">Transit peptide</keyword>
<sequence>MLKYAWQSGPKQRNRWLWHLSNQIWKRSYSSKIRNIGILAHIDAGKTTTTERMLFYAGKTRALGEVHRGNTVTDYLTQERERGITICSSAVTFPWNDHRINLLDTPGHIDFTMEVEQSLYAVDGVVVVLDGTAGVEAQTVTVWSQADKHKLPRLIFVNKMDRPDADFEKCVSDLKDKLETQPVCLQYPVKNDDGVLAINDVITLERLSWQKKDLGRSYRNVKLEPSDDLRVLQEKRNELIDQLSGLDDELADVVISTESFDNVDNALIERALRRATAQQKVVPVLLGSAYKNVGIQRLMDAVNAYLPAPEERNQIYDCFGGEIKRGMRLISARGQAEVVSKLYEPLADEYREVGAVQSGDVVICAGLKSTVTGDLLTSTEEDDELDESAELFAIDPQIPDAVYFCSIEPPSVSSQTAMEQALKQLQREDPSLRVSYDSVTGQTVLGGMGELHMDIIKSRILSDYKIDVDLGPLQIAYKETIEAPALTTQSVEKEIAGSKQSVSITLEVVKNQAELFSLDKSPENLPNLNTLRPRILQVLRKGSISALERGPRVGGQVVETQIRLHNATIGRGTADSFVMATAAQCVQKLLSTSGTRLLEPIMALQIVAPSERISGIIADLSRRRALINDVLPKGERNKMILVNAPLAELSGYSSALRTISSGTGSMTMQPCGFSSMNSVDESLAERRAQGLE</sequence>
<proteinExistence type="inferred from homology"/>
<evidence type="ECO:0000250" key="1">
    <source>
        <dbReference type="UniProtKB" id="Q9VCX4"/>
    </source>
</evidence>
<evidence type="ECO:0000255" key="2">
    <source>
        <dbReference type="HAMAP-Rule" id="MF_03059"/>
    </source>
</evidence>
<dbReference type="EMBL" id="CH480815">
    <property type="protein sequence ID" value="EDW43219.1"/>
    <property type="molecule type" value="Genomic_DNA"/>
</dbReference>
<dbReference type="RefSeq" id="XP_002032233.1">
    <property type="nucleotide sequence ID" value="XM_002032197.1"/>
</dbReference>
<dbReference type="SMR" id="B4HEQ8"/>
<dbReference type="STRING" id="7238.B4HEQ8"/>
<dbReference type="EnsemblMetazoa" id="FBtr0209435">
    <property type="protein sequence ID" value="FBpp0207927"/>
    <property type="gene ID" value="FBgn0181303"/>
</dbReference>
<dbReference type="HOGENOM" id="CLU_002794_4_1_1"/>
<dbReference type="OMA" id="GPQFTFP"/>
<dbReference type="PhylomeDB" id="B4HEQ8"/>
<dbReference type="Proteomes" id="UP000001292">
    <property type="component" value="Unassembled WGS sequence"/>
</dbReference>
<dbReference type="GO" id="GO:0005739">
    <property type="term" value="C:mitochondrion"/>
    <property type="evidence" value="ECO:0007669"/>
    <property type="project" value="UniProtKB-SubCell"/>
</dbReference>
<dbReference type="GO" id="GO:0005525">
    <property type="term" value="F:GTP binding"/>
    <property type="evidence" value="ECO:0007669"/>
    <property type="project" value="UniProtKB-UniRule"/>
</dbReference>
<dbReference type="GO" id="GO:0003924">
    <property type="term" value="F:GTPase activity"/>
    <property type="evidence" value="ECO:0000250"/>
    <property type="project" value="UniProtKB"/>
</dbReference>
<dbReference type="GO" id="GO:0032543">
    <property type="term" value="P:mitochondrial translation"/>
    <property type="evidence" value="ECO:0000250"/>
    <property type="project" value="UniProtKB"/>
</dbReference>
<dbReference type="GO" id="GO:0032790">
    <property type="term" value="P:ribosome disassembly"/>
    <property type="evidence" value="ECO:0000250"/>
    <property type="project" value="UniProtKB"/>
</dbReference>
<dbReference type="CDD" id="cd16262">
    <property type="entry name" value="EFG_III"/>
    <property type="match status" value="1"/>
</dbReference>
<dbReference type="CDD" id="cd03713">
    <property type="entry name" value="EFG_mtEFG_C"/>
    <property type="match status" value="1"/>
</dbReference>
<dbReference type="CDD" id="cd01693">
    <property type="entry name" value="mtEFG2_like_IV"/>
    <property type="match status" value="1"/>
</dbReference>
<dbReference type="FunFam" id="3.30.70.240:FF:000001">
    <property type="entry name" value="Elongation factor G"/>
    <property type="match status" value="1"/>
</dbReference>
<dbReference type="FunFam" id="3.30.230.10:FF:000033">
    <property type="entry name" value="Ribosome-releasing factor 2, mitochondrial"/>
    <property type="match status" value="1"/>
</dbReference>
<dbReference type="FunFam" id="3.30.70.870:FF:000005">
    <property type="entry name" value="Ribosome-releasing factor 2, mitochondrial"/>
    <property type="match status" value="1"/>
</dbReference>
<dbReference type="FunFam" id="3.40.50.300:FF:000514">
    <property type="entry name" value="Ribosome-releasing factor 2, mitochondrial"/>
    <property type="match status" value="1"/>
</dbReference>
<dbReference type="Gene3D" id="3.30.230.10">
    <property type="match status" value="1"/>
</dbReference>
<dbReference type="Gene3D" id="3.30.70.240">
    <property type="match status" value="1"/>
</dbReference>
<dbReference type="Gene3D" id="3.30.70.870">
    <property type="entry name" value="Elongation Factor G (Translational Gtpase), domain 3"/>
    <property type="match status" value="1"/>
</dbReference>
<dbReference type="Gene3D" id="3.40.50.300">
    <property type="entry name" value="P-loop containing nucleotide triphosphate hydrolases"/>
    <property type="match status" value="1"/>
</dbReference>
<dbReference type="Gene3D" id="2.40.30.10">
    <property type="entry name" value="Translation factors"/>
    <property type="match status" value="1"/>
</dbReference>
<dbReference type="HAMAP" id="MF_03059">
    <property type="entry name" value="mEF_G_2"/>
    <property type="match status" value="1"/>
</dbReference>
<dbReference type="InterPro" id="IPR030851">
    <property type="entry name" value="EFG2"/>
</dbReference>
<dbReference type="InterPro" id="IPR041095">
    <property type="entry name" value="EFG_II"/>
</dbReference>
<dbReference type="InterPro" id="IPR009022">
    <property type="entry name" value="EFG_III"/>
</dbReference>
<dbReference type="InterPro" id="IPR035647">
    <property type="entry name" value="EFG_III/V"/>
</dbReference>
<dbReference type="InterPro" id="IPR035649">
    <property type="entry name" value="EFG_V"/>
</dbReference>
<dbReference type="InterPro" id="IPR000640">
    <property type="entry name" value="EFG_V-like"/>
</dbReference>
<dbReference type="InterPro" id="IPR031157">
    <property type="entry name" value="G_TR_CS"/>
</dbReference>
<dbReference type="InterPro" id="IPR027417">
    <property type="entry name" value="P-loop_NTPase"/>
</dbReference>
<dbReference type="InterPro" id="IPR020568">
    <property type="entry name" value="Ribosomal_Su5_D2-typ_SF"/>
</dbReference>
<dbReference type="InterPro" id="IPR014721">
    <property type="entry name" value="Ribsml_uS5_D2-typ_fold_subgr"/>
</dbReference>
<dbReference type="InterPro" id="IPR005225">
    <property type="entry name" value="Small_GTP-bd"/>
</dbReference>
<dbReference type="InterPro" id="IPR000795">
    <property type="entry name" value="T_Tr_GTP-bd_dom"/>
</dbReference>
<dbReference type="InterPro" id="IPR009000">
    <property type="entry name" value="Transl_B-barrel_sf"/>
</dbReference>
<dbReference type="NCBIfam" id="TIGR00231">
    <property type="entry name" value="small_GTP"/>
    <property type="match status" value="1"/>
</dbReference>
<dbReference type="PANTHER" id="PTHR43261:SF1">
    <property type="entry name" value="RIBOSOME-RELEASING FACTOR 2, MITOCHONDRIAL"/>
    <property type="match status" value="1"/>
</dbReference>
<dbReference type="PANTHER" id="PTHR43261">
    <property type="entry name" value="TRANSLATION ELONGATION FACTOR G-RELATED"/>
    <property type="match status" value="1"/>
</dbReference>
<dbReference type="Pfam" id="PF00679">
    <property type="entry name" value="EFG_C"/>
    <property type="match status" value="1"/>
</dbReference>
<dbReference type="Pfam" id="PF14492">
    <property type="entry name" value="EFG_III"/>
    <property type="match status" value="1"/>
</dbReference>
<dbReference type="Pfam" id="PF00009">
    <property type="entry name" value="GTP_EFTU"/>
    <property type="match status" value="1"/>
</dbReference>
<dbReference type="PRINTS" id="PR00315">
    <property type="entry name" value="ELONGATNFCT"/>
</dbReference>
<dbReference type="SMART" id="SM00838">
    <property type="entry name" value="EFG_C"/>
    <property type="match status" value="1"/>
</dbReference>
<dbReference type="SUPFAM" id="SSF54980">
    <property type="entry name" value="EF-G C-terminal domain-like"/>
    <property type="match status" value="2"/>
</dbReference>
<dbReference type="SUPFAM" id="SSF52540">
    <property type="entry name" value="P-loop containing nucleoside triphosphate hydrolases"/>
    <property type="match status" value="1"/>
</dbReference>
<dbReference type="SUPFAM" id="SSF54211">
    <property type="entry name" value="Ribosomal protein S5 domain 2-like"/>
    <property type="match status" value="1"/>
</dbReference>
<dbReference type="SUPFAM" id="SSF50447">
    <property type="entry name" value="Translation proteins"/>
    <property type="match status" value="1"/>
</dbReference>
<dbReference type="PROSITE" id="PS00301">
    <property type="entry name" value="G_TR_1"/>
    <property type="match status" value="1"/>
</dbReference>
<dbReference type="PROSITE" id="PS51722">
    <property type="entry name" value="G_TR_2"/>
    <property type="match status" value="1"/>
</dbReference>
<feature type="transit peptide" description="Mitochondrion" evidence="2">
    <location>
        <begin position="1"/>
        <end position="29"/>
    </location>
</feature>
<feature type="chain" id="PRO_0000385604" description="Ribosome-releasing factor 2, mitochondrial">
    <location>
        <begin position="30"/>
        <end position="692"/>
    </location>
</feature>
<feature type="domain" description="tr-type G">
    <location>
        <begin position="31"/>
        <end position="310"/>
    </location>
</feature>
<feature type="binding site" evidence="2">
    <location>
        <begin position="40"/>
        <end position="47"/>
    </location>
    <ligand>
        <name>GTP</name>
        <dbReference type="ChEBI" id="CHEBI:37565"/>
    </ligand>
</feature>
<feature type="binding site" evidence="2">
    <location>
        <begin position="104"/>
        <end position="108"/>
    </location>
    <ligand>
        <name>GTP</name>
        <dbReference type="ChEBI" id="CHEBI:37565"/>
    </ligand>
</feature>
<feature type="binding site" evidence="2">
    <location>
        <begin position="158"/>
        <end position="161"/>
    </location>
    <ligand>
        <name>GTP</name>
        <dbReference type="ChEBI" id="CHEBI:37565"/>
    </ligand>
</feature>
<accession>B4HEQ8</accession>
<name>RRF2M_DROSE</name>
<comment type="function">
    <text evidence="2">Mitochondrial GTPase that mediates the disassembly of ribosomes from messenger RNA at the termination of mitochondrial protein biosynthesis. Not involved in the GTP-dependent ribosomal translocation step during translation elongation.</text>
</comment>
<comment type="subcellular location">
    <subcellularLocation>
        <location evidence="2">Mitochondrion</location>
    </subcellularLocation>
</comment>
<comment type="similarity">
    <text evidence="2">Belongs to the TRAFAC class translation factor GTPase superfamily. Classic translation factor GTPase family. EF-G/EF-2 subfamily.</text>
</comment>
<gene>
    <name evidence="1" type="primary">mRRF2</name>
    <name evidence="1" type="synonym">EF-G2</name>
    <name type="ORF">GM26450</name>
</gene>
<protein>
    <recommendedName>
        <fullName evidence="2">Ribosome-releasing factor 2, mitochondrial</fullName>
        <shortName evidence="2">RRF2mt</shortName>
    </recommendedName>
    <alternativeName>
        <fullName evidence="2">Elongation factor G 2, mitochondrial</fullName>
        <shortName evidence="2">EF-G2mt</shortName>
        <shortName evidence="2">mEF-G 2</shortName>
    </alternativeName>
</protein>